<comment type="function">
    <text>Gap class segmentation protein that controls development of head structures.</text>
</comment>
<comment type="subcellular location">
    <subcellularLocation>
        <location evidence="3">Nucleus</location>
    </subcellularLocation>
</comment>
<comment type="similarity">
    <text evidence="3">Belongs to the hunchback C2H2-type zinc-finger protein family.</text>
</comment>
<evidence type="ECO:0000255" key="1">
    <source>
        <dbReference type="PROSITE-ProRule" id="PRU00042"/>
    </source>
</evidence>
<evidence type="ECO:0000256" key="2">
    <source>
        <dbReference type="SAM" id="MobiDB-lite"/>
    </source>
</evidence>
<evidence type="ECO:0000305" key="3"/>
<reference key="1">
    <citation type="submission" date="1997-05" db="EMBL/GenBank/DDBJ databases">
        <authorList>
            <person name="Bonneton F."/>
            <person name="Shaw P.J."/>
            <person name="Fazakerley C."/>
            <person name="Shi M."/>
            <person name="Dover G.A."/>
        </authorList>
    </citation>
    <scope>NUCLEOTIDE SEQUENCE [GENOMIC DNA]</scope>
    <source>
        <strain>Cooper</strain>
    </source>
</reference>
<reference key="2">
    <citation type="journal article" date="1992" name="Proc. Natl. Acad. Sci. U.S.A.">
        <title>Evolutionary conservation pattern of zinc-finger domains of Drosophila segmentation genes.</title>
        <authorList>
            <person name="Sommer R.J."/>
            <person name="Retzlaff M."/>
            <person name="Goerlich K."/>
            <person name="Sander K."/>
            <person name="Tautz D."/>
        </authorList>
    </citation>
    <scope>NUCLEOTIDE SEQUENCE [GENOMIC DNA] OF 328-396</scope>
</reference>
<dbReference type="EMBL" id="Y13050">
    <property type="protein sequence ID" value="CAA73487.1"/>
    <property type="molecule type" value="Genomic_DNA"/>
</dbReference>
<dbReference type="EMBL" id="L01601">
    <property type="protein sequence ID" value="AAA29296.1"/>
    <property type="molecule type" value="Genomic_DNA"/>
</dbReference>
<dbReference type="SMR" id="Q01778"/>
<dbReference type="STRING" id="7370.Q01778"/>
<dbReference type="VEuPathDB" id="VectorBase:MDOA009167"/>
<dbReference type="VEuPathDB" id="VectorBase:MDOMA2_019023"/>
<dbReference type="eggNOG" id="KOG1721">
    <property type="taxonomic scope" value="Eukaryota"/>
</dbReference>
<dbReference type="Proteomes" id="UP000694905">
    <property type="component" value="Unplaced"/>
</dbReference>
<dbReference type="GO" id="GO:0005634">
    <property type="term" value="C:nucleus"/>
    <property type="evidence" value="ECO:0007669"/>
    <property type="project" value="UniProtKB-SubCell"/>
</dbReference>
<dbReference type="GO" id="GO:0003677">
    <property type="term" value="F:DNA binding"/>
    <property type="evidence" value="ECO:0007669"/>
    <property type="project" value="UniProtKB-KW"/>
</dbReference>
<dbReference type="GO" id="GO:0008270">
    <property type="term" value="F:zinc ion binding"/>
    <property type="evidence" value="ECO:0007669"/>
    <property type="project" value="UniProtKB-KW"/>
</dbReference>
<dbReference type="GO" id="GO:0035282">
    <property type="term" value="P:segmentation"/>
    <property type="evidence" value="ECO:0007669"/>
    <property type="project" value="UniProtKB-KW"/>
</dbReference>
<dbReference type="FunFam" id="3.30.160.60:FF:001301">
    <property type="entry name" value="Blast:Protein hunchback"/>
    <property type="match status" value="1"/>
</dbReference>
<dbReference type="FunFam" id="3.30.160.60:FF:001482">
    <property type="entry name" value="Hunchback"/>
    <property type="match status" value="1"/>
</dbReference>
<dbReference type="Gene3D" id="3.30.160.60">
    <property type="entry name" value="Classic Zinc Finger"/>
    <property type="match status" value="3"/>
</dbReference>
<dbReference type="InterPro" id="IPR052145">
    <property type="entry name" value="Mediator/Homeobox_domain"/>
</dbReference>
<dbReference type="InterPro" id="IPR036236">
    <property type="entry name" value="Znf_C2H2_sf"/>
</dbReference>
<dbReference type="InterPro" id="IPR013087">
    <property type="entry name" value="Znf_C2H2_type"/>
</dbReference>
<dbReference type="PANTHER" id="PTHR24330">
    <property type="entry name" value="HOMEOBOX PROTEIN BARH-LIKE"/>
    <property type="match status" value="1"/>
</dbReference>
<dbReference type="PANTHER" id="PTHR24330:SF19">
    <property type="entry name" value="MEDIATOR OF RNA POLYMERASE II TRANSCRIPTION SUBUNIT 29"/>
    <property type="match status" value="1"/>
</dbReference>
<dbReference type="Pfam" id="PF00096">
    <property type="entry name" value="zf-C2H2"/>
    <property type="match status" value="1"/>
</dbReference>
<dbReference type="SMART" id="SM00355">
    <property type="entry name" value="ZnF_C2H2"/>
    <property type="match status" value="6"/>
</dbReference>
<dbReference type="SUPFAM" id="SSF57667">
    <property type="entry name" value="beta-beta-alpha zinc fingers"/>
    <property type="match status" value="3"/>
</dbReference>
<dbReference type="PROSITE" id="PS00028">
    <property type="entry name" value="ZINC_FINGER_C2H2_1"/>
    <property type="match status" value="3"/>
</dbReference>
<dbReference type="PROSITE" id="PS50157">
    <property type="entry name" value="ZINC_FINGER_C2H2_2"/>
    <property type="match status" value="2"/>
</dbReference>
<feature type="chain" id="PRO_0000046977" description="Protein hunchback">
    <location>
        <begin position="1"/>
        <end position="817"/>
    </location>
</feature>
<feature type="zinc finger region" description="C2H2-type 1" evidence="1">
    <location>
        <begin position="287"/>
        <end position="309"/>
    </location>
</feature>
<feature type="zinc finger region" description="C2H2-type 2" evidence="1">
    <location>
        <begin position="316"/>
        <end position="338"/>
    </location>
</feature>
<feature type="zinc finger region" description="C2H2-type 3" evidence="1">
    <location>
        <begin position="344"/>
        <end position="366"/>
    </location>
</feature>
<feature type="zinc finger region" description="C2H2-type 4" evidence="1">
    <location>
        <begin position="372"/>
        <end position="396"/>
    </location>
</feature>
<feature type="zinc finger region" description="C2H2-type 5" evidence="1">
    <location>
        <begin position="764"/>
        <end position="786"/>
    </location>
</feature>
<feature type="zinc finger region" description="C2H2-type 6" evidence="1">
    <location>
        <begin position="792"/>
        <end position="816"/>
    </location>
</feature>
<feature type="region of interest" description="Disordered" evidence="2">
    <location>
        <begin position="51"/>
        <end position="77"/>
    </location>
</feature>
<feature type="region of interest" description="Disordered" evidence="2">
    <location>
        <begin position="93"/>
        <end position="132"/>
    </location>
</feature>
<feature type="region of interest" description="Disordered" evidence="2">
    <location>
        <begin position="187"/>
        <end position="252"/>
    </location>
</feature>
<feature type="region of interest" description="Disordered" evidence="2">
    <location>
        <begin position="456"/>
        <end position="477"/>
    </location>
</feature>
<feature type="region of interest" description="Disordered" evidence="2">
    <location>
        <begin position="491"/>
        <end position="513"/>
    </location>
</feature>
<feature type="region of interest" description="Disordered" evidence="2">
    <location>
        <begin position="564"/>
        <end position="619"/>
    </location>
</feature>
<feature type="region of interest" description="Disordered" evidence="2">
    <location>
        <begin position="666"/>
        <end position="758"/>
    </location>
</feature>
<feature type="compositionally biased region" description="Low complexity" evidence="2">
    <location>
        <begin position="62"/>
        <end position="76"/>
    </location>
</feature>
<feature type="compositionally biased region" description="Polar residues" evidence="2">
    <location>
        <begin position="103"/>
        <end position="119"/>
    </location>
</feature>
<feature type="compositionally biased region" description="Low complexity" evidence="2">
    <location>
        <begin position="189"/>
        <end position="201"/>
    </location>
</feature>
<feature type="compositionally biased region" description="Low complexity" evidence="2">
    <location>
        <begin position="564"/>
        <end position="576"/>
    </location>
</feature>
<feature type="compositionally biased region" description="Acidic residues" evidence="2">
    <location>
        <begin position="577"/>
        <end position="595"/>
    </location>
</feature>
<feature type="compositionally biased region" description="Polar residues" evidence="2">
    <location>
        <begin position="680"/>
        <end position="694"/>
    </location>
</feature>
<feature type="compositionally biased region" description="Low complexity" evidence="2">
    <location>
        <begin position="721"/>
        <end position="758"/>
    </location>
</feature>
<protein>
    <recommendedName>
        <fullName>Protein hunchback</fullName>
    </recommendedName>
</protein>
<proteinExistence type="inferred from homology"/>
<keyword id="KW-0217">Developmental protein</keyword>
<keyword id="KW-0238">DNA-binding</keyword>
<keyword id="KW-0302">Gap protein</keyword>
<keyword id="KW-0479">Metal-binding</keyword>
<keyword id="KW-0539">Nucleus</keyword>
<keyword id="KW-1185">Reference proteome</keyword>
<keyword id="KW-0677">Repeat</keyword>
<keyword id="KW-0862">Zinc</keyword>
<keyword id="KW-0863">Zinc-finger</keyword>
<organism>
    <name type="scientific">Musca domestica</name>
    <name type="common">House fly</name>
    <dbReference type="NCBI Taxonomy" id="7370"/>
    <lineage>
        <taxon>Eukaryota</taxon>
        <taxon>Metazoa</taxon>
        <taxon>Ecdysozoa</taxon>
        <taxon>Arthropoda</taxon>
        <taxon>Hexapoda</taxon>
        <taxon>Insecta</taxon>
        <taxon>Pterygota</taxon>
        <taxon>Neoptera</taxon>
        <taxon>Endopterygota</taxon>
        <taxon>Diptera</taxon>
        <taxon>Brachycera</taxon>
        <taxon>Muscomorpha</taxon>
        <taxon>Muscoidea</taxon>
        <taxon>Muscidae</taxon>
        <taxon>Musca</taxon>
    </lineage>
</organism>
<name>HUNB_MUSDO</name>
<sequence>MQNWDTATNNNSNNNKSPALTMQQTAANSNNFLEHNTWYNQMFAANIKQEPGTINPHHQHPQQHSSMMASQPQHSPLTHSANHLENYLKQHAHNGGGAHHLQFSDNSGAMTPSPNTNVGGQDFGFESNTSSALNPSLQQHQLYQQHFQQAQQAAAQNQVSSHLPLGFNPLTPPGLPNAVLPAMNHYYSQQQQQQQQRQLQQTPSPSACLSDAHEKSSALTPRHTPPMDITPPKSPKTTVQAMDHQQHPEDQDLISNSSEDLKYIAESEDDESIRMPIYNSHGKMKNHKCKSCGMVAITKMAFWEHARTHMKPEKILQCPKCPFVTELKHHLEYHIRKHKNLKPFQCDKCSYSCVNKSMLNSHRKSHSSVYQYRCADCDYATKYCHSFKLHLRKYEHKPGMVLDEEGIPNPSVVIDVYGTRRGPKNKSAANAALKKACSDLKIPPTSQLSAALQGFPLQQQQQPQQPASPAKSSSSVASELPALTLNMSLQQNLAQQQQQQQQSPGAQSHSSQQQINNLLPPLASLLQQNRNMAFFPYWNLNLQMLAAQQQAAVLAQLSPRMREQLQQQQQNKQANENGEEDEEDNDEVDEDEEEFDGKSVDSAMDLSQGTPTKEEQQTPELAMNLKLSEEHGETPLFSSSAAARRKGRVLKLDQEKTAGHLQIASAPTSPQHHLHHNNEMPPTTSSPIHPSQVNGVAAGAADHSSADESMETGHHHHHHNPTTANTSASSTASSSGNSSNSSSTSTSSNSNSSSAGNSPNTTMYECKYCDIFFKDAVLYTIHMGYHSCDDVFKCNMCGEKCDGPVGLFVHMARNAHS</sequence>
<accession>Q01778</accession>
<gene>
    <name type="primary">hb</name>
</gene>